<comment type="function">
    <text evidence="1">May play an essential role in Wnt signaling pathway. May be required for Wnt-dependent patterning processes (By similarity).</text>
</comment>
<comment type="subcellular location">
    <subcellularLocation>
        <location evidence="1">Golgi apparatus membrane</location>
        <topology evidence="1">Multi-pass membrane protein</topology>
    </subcellularLocation>
    <subcellularLocation>
        <location evidence="1">Cytoplasmic vesicle membrane</location>
        <topology evidence="1">Multi-pass membrane protein</topology>
    </subcellularLocation>
</comment>
<comment type="similarity">
    <text evidence="3">Belongs to the wntless family.</text>
</comment>
<proteinExistence type="evidence at transcript level"/>
<gene>
    <name type="primary">WLS</name>
    <name type="synonym">GPR177</name>
    <name type="ORF">RCJMB04_5c7</name>
</gene>
<protein>
    <recommendedName>
        <fullName>Protein wntless homolog</fullName>
    </recommendedName>
    <alternativeName>
        <fullName>Integral membrane protein GPR177</fullName>
    </alternativeName>
</protein>
<sequence>MAGAIIENMSTRKLCIVGGILLVFQVIAFLVGGLIAPSPTTAVPYMSVKCIDVRKNHHKTKWLMPWGPNHCEKLKDFDEAVSRQIEANDIVFAVHIPLPSKEMSPWFQFMLFIMQLDIAFKMDNDLKENAEITLDVSLAYRDDMFNDWEEIAHAIEIRKLKCTFGSPKTLESEGRHYDCDFLPFMEIGSVAHKYYLINIRLPVNERKGINVGIGEVKDIRLVGIHQNGGFTKVWFAMKTFLTPSILIIMVWYWRRITLMTRAPVLLEKVIFALGISMTFINIPVEWFSIGFDWTWMLLFGDIRQGIFYAMLLSFWIIFCGEHMMDQNERNRLSGYWKQVGPIAVGSFCLFIFDMCERGVQLKNPFYSIWTTEVGTELAMAFIIVAGICLCLYFLFLCFMVFQVFRNISGKQSSLPAMSKARRLHYEGLIFRFKFLMLITLACAAMTVIFFIVSQVTEGHWKWGDITIQVNSAFFTGIYGMWNLYVFALMFLYAPSHKNYGEDQSNGDLGVSSGEELQLTTTITHVDGPTEVYKLARKEAQE</sequence>
<name>WLS_CHICK</name>
<reference key="1">
    <citation type="journal article" date="2005" name="Genome Biol.">
        <title>Full-length cDNAs from chicken bursal lymphocytes to facilitate gene function analysis.</title>
        <authorList>
            <person name="Caldwell R.B."/>
            <person name="Kierzek A.M."/>
            <person name="Arakawa H."/>
            <person name="Bezzubov Y."/>
            <person name="Zaim J."/>
            <person name="Fiedler P."/>
            <person name="Kutter S."/>
            <person name="Blagodatski A."/>
            <person name="Kostovska D."/>
            <person name="Koter M."/>
            <person name="Plachy J."/>
            <person name="Carninci P."/>
            <person name="Hayashizaki Y."/>
            <person name="Buerstedde J.-M."/>
        </authorList>
    </citation>
    <scope>NUCLEOTIDE SEQUENCE [LARGE SCALE MRNA]</scope>
    <source>
        <strain>CB</strain>
        <tissue>Bursa of Fabricius</tissue>
    </source>
</reference>
<accession>Q5ZLR1</accession>
<evidence type="ECO:0000250" key="1"/>
<evidence type="ECO:0000255" key="2"/>
<evidence type="ECO:0000305" key="3"/>
<feature type="signal peptide" evidence="2">
    <location>
        <begin position="1"/>
        <end position="42"/>
    </location>
</feature>
<feature type="chain" id="PRO_0000271781" description="Protein wntless homolog">
    <location>
        <begin position="43"/>
        <end position="541"/>
    </location>
</feature>
<feature type="topological domain" description="Lumenal" evidence="2">
    <location>
        <begin position="43"/>
        <end position="232"/>
    </location>
</feature>
<feature type="transmembrane region" description="Helical; Name=1" evidence="2">
    <location>
        <begin position="233"/>
        <end position="253"/>
    </location>
</feature>
<feature type="topological domain" description="Cytoplasmic" evidence="2">
    <location>
        <begin position="254"/>
        <end position="268"/>
    </location>
</feature>
<feature type="transmembrane region" description="Helical; Name=2" evidence="2">
    <location>
        <begin position="269"/>
        <end position="289"/>
    </location>
</feature>
<feature type="topological domain" description="Lumenal" evidence="2">
    <location>
        <begin position="290"/>
        <end position="303"/>
    </location>
</feature>
<feature type="transmembrane region" description="Helical; Name=3" evidence="2">
    <location>
        <begin position="304"/>
        <end position="324"/>
    </location>
</feature>
<feature type="topological domain" description="Cytoplasmic" evidence="2">
    <location>
        <begin position="325"/>
        <end position="331"/>
    </location>
</feature>
<feature type="transmembrane region" description="Helical; Name=4" evidence="2">
    <location>
        <begin position="332"/>
        <end position="352"/>
    </location>
</feature>
<feature type="topological domain" description="Lumenal" evidence="2">
    <location>
        <begin position="353"/>
        <end position="380"/>
    </location>
</feature>
<feature type="transmembrane region" description="Helical; Name=5" evidence="2">
    <location>
        <begin position="381"/>
        <end position="401"/>
    </location>
</feature>
<feature type="topological domain" description="Cytoplasmic" evidence="2">
    <location>
        <begin position="402"/>
        <end position="431"/>
    </location>
</feature>
<feature type="transmembrane region" description="Helical; Name=6" evidence="2">
    <location>
        <begin position="432"/>
        <end position="452"/>
    </location>
</feature>
<feature type="topological domain" description="Lumenal" evidence="2">
    <location>
        <begin position="453"/>
        <end position="471"/>
    </location>
</feature>
<feature type="transmembrane region" description="Helical; Name=7" evidence="2">
    <location>
        <begin position="472"/>
        <end position="492"/>
    </location>
</feature>
<feature type="topological domain" description="Cytoplasmic" evidence="2">
    <location>
        <begin position="493"/>
        <end position="541"/>
    </location>
</feature>
<organism>
    <name type="scientific">Gallus gallus</name>
    <name type="common">Chicken</name>
    <dbReference type="NCBI Taxonomy" id="9031"/>
    <lineage>
        <taxon>Eukaryota</taxon>
        <taxon>Metazoa</taxon>
        <taxon>Chordata</taxon>
        <taxon>Craniata</taxon>
        <taxon>Vertebrata</taxon>
        <taxon>Euteleostomi</taxon>
        <taxon>Archelosauria</taxon>
        <taxon>Archosauria</taxon>
        <taxon>Dinosauria</taxon>
        <taxon>Saurischia</taxon>
        <taxon>Theropoda</taxon>
        <taxon>Coelurosauria</taxon>
        <taxon>Aves</taxon>
        <taxon>Neognathae</taxon>
        <taxon>Galloanserae</taxon>
        <taxon>Galliformes</taxon>
        <taxon>Phasianidae</taxon>
        <taxon>Phasianinae</taxon>
        <taxon>Gallus</taxon>
    </lineage>
</organism>
<keyword id="KW-0968">Cytoplasmic vesicle</keyword>
<keyword id="KW-0217">Developmental protein</keyword>
<keyword id="KW-0333">Golgi apparatus</keyword>
<keyword id="KW-0472">Membrane</keyword>
<keyword id="KW-1185">Reference proteome</keyword>
<keyword id="KW-0732">Signal</keyword>
<keyword id="KW-0812">Transmembrane</keyword>
<keyword id="KW-1133">Transmembrane helix</keyword>
<keyword id="KW-0879">Wnt signaling pathway</keyword>
<dbReference type="EMBL" id="AJ719673">
    <property type="protein sequence ID" value="CAG31332.1"/>
    <property type="molecule type" value="mRNA"/>
</dbReference>
<dbReference type="RefSeq" id="NP_001026465.1">
    <property type="nucleotide sequence ID" value="NM_001031294.1"/>
</dbReference>
<dbReference type="SMR" id="Q5ZLR1"/>
<dbReference type="FunCoup" id="Q5ZLR1">
    <property type="interactions" value="117"/>
</dbReference>
<dbReference type="STRING" id="9031.ENSGALP00000018306"/>
<dbReference type="GlyGen" id="Q5ZLR1">
    <property type="glycosylation" value="1 site"/>
</dbReference>
<dbReference type="PaxDb" id="9031-ENSGALP00000018306"/>
<dbReference type="GeneID" id="424707"/>
<dbReference type="KEGG" id="gga:424707"/>
<dbReference type="CTD" id="79971"/>
<dbReference type="VEuPathDB" id="HostDB:geneid_424707"/>
<dbReference type="eggNOG" id="ENOG502QSE2">
    <property type="taxonomic scope" value="Eukaryota"/>
</dbReference>
<dbReference type="InParanoid" id="Q5ZLR1"/>
<dbReference type="OrthoDB" id="5804250at2759"/>
<dbReference type="PhylomeDB" id="Q5ZLR1"/>
<dbReference type="PRO" id="PR:Q5ZLR1"/>
<dbReference type="Proteomes" id="UP000000539">
    <property type="component" value="Unassembled WGS sequence"/>
</dbReference>
<dbReference type="GO" id="GO:0030659">
    <property type="term" value="C:cytoplasmic vesicle membrane"/>
    <property type="evidence" value="ECO:0007669"/>
    <property type="project" value="UniProtKB-SubCell"/>
</dbReference>
<dbReference type="GO" id="GO:0012505">
    <property type="term" value="C:endomembrane system"/>
    <property type="evidence" value="ECO:0000318"/>
    <property type="project" value="GO_Central"/>
</dbReference>
<dbReference type="GO" id="GO:0000139">
    <property type="term" value="C:Golgi membrane"/>
    <property type="evidence" value="ECO:0007669"/>
    <property type="project" value="UniProtKB-SubCell"/>
</dbReference>
<dbReference type="GO" id="GO:0031090">
    <property type="term" value="C:organelle membrane"/>
    <property type="evidence" value="ECO:0000318"/>
    <property type="project" value="GO_Central"/>
</dbReference>
<dbReference type="GO" id="GO:0017147">
    <property type="term" value="F:Wnt-protein binding"/>
    <property type="evidence" value="ECO:0000318"/>
    <property type="project" value="GO_Central"/>
</dbReference>
<dbReference type="GO" id="GO:0006886">
    <property type="term" value="P:intracellular protein transport"/>
    <property type="evidence" value="ECO:0000318"/>
    <property type="project" value="GO_Central"/>
</dbReference>
<dbReference type="GO" id="GO:0061357">
    <property type="term" value="P:positive regulation of Wnt protein secretion"/>
    <property type="evidence" value="ECO:0000250"/>
    <property type="project" value="ParkinsonsUK-UCL"/>
</dbReference>
<dbReference type="GO" id="GO:0030177">
    <property type="term" value="P:positive regulation of Wnt signaling pathway"/>
    <property type="evidence" value="ECO:0000250"/>
    <property type="project" value="ParkinsonsUK-UCL"/>
</dbReference>
<dbReference type="GO" id="GO:0061355">
    <property type="term" value="P:Wnt protein secretion"/>
    <property type="evidence" value="ECO:0000318"/>
    <property type="project" value="GO_Central"/>
</dbReference>
<dbReference type="GO" id="GO:0016055">
    <property type="term" value="P:Wnt signaling pathway"/>
    <property type="evidence" value="ECO:0007669"/>
    <property type="project" value="UniProtKB-KW"/>
</dbReference>
<dbReference type="InterPro" id="IPR047843">
    <property type="entry name" value="WLS-like_TM"/>
</dbReference>
<dbReference type="InterPro" id="IPR053936">
    <property type="entry name" value="WLS_GOLD"/>
</dbReference>
<dbReference type="InterPro" id="IPR009551">
    <property type="entry name" value="Wntless"/>
</dbReference>
<dbReference type="PANTHER" id="PTHR13449">
    <property type="entry name" value="INTEGRAL MEMBRANE PROTEIN GPR177"/>
    <property type="match status" value="1"/>
</dbReference>
<dbReference type="PANTHER" id="PTHR13449:SF2">
    <property type="entry name" value="PROTEIN WNTLESS HOMOLOG"/>
    <property type="match status" value="1"/>
</dbReference>
<dbReference type="Pfam" id="PF06664">
    <property type="entry name" value="WLS-like_TM"/>
    <property type="match status" value="1"/>
</dbReference>
<dbReference type="Pfam" id="PF21883">
    <property type="entry name" value="WLS_GOLD"/>
    <property type="match status" value="1"/>
</dbReference>